<accession>Q4UW98</accession>
<proteinExistence type="inferred from homology"/>
<name>PNP_XANC8</name>
<dbReference type="EC" id="2.7.7.8" evidence="1"/>
<dbReference type="EMBL" id="CP000050">
    <property type="protein sequence ID" value="AAY48675.1"/>
    <property type="molecule type" value="Genomic_DNA"/>
</dbReference>
<dbReference type="RefSeq" id="WP_011037640.1">
    <property type="nucleotide sequence ID" value="NZ_CP155948.1"/>
</dbReference>
<dbReference type="SMR" id="Q4UW98"/>
<dbReference type="GeneID" id="58012887"/>
<dbReference type="KEGG" id="xcb:XC_1609"/>
<dbReference type="HOGENOM" id="CLU_004217_2_2_6"/>
<dbReference type="Proteomes" id="UP000000420">
    <property type="component" value="Chromosome"/>
</dbReference>
<dbReference type="GO" id="GO:0005829">
    <property type="term" value="C:cytosol"/>
    <property type="evidence" value="ECO:0007669"/>
    <property type="project" value="TreeGrafter"/>
</dbReference>
<dbReference type="GO" id="GO:0000175">
    <property type="term" value="F:3'-5'-RNA exonuclease activity"/>
    <property type="evidence" value="ECO:0007669"/>
    <property type="project" value="TreeGrafter"/>
</dbReference>
<dbReference type="GO" id="GO:0000287">
    <property type="term" value="F:magnesium ion binding"/>
    <property type="evidence" value="ECO:0007669"/>
    <property type="project" value="UniProtKB-UniRule"/>
</dbReference>
<dbReference type="GO" id="GO:0004654">
    <property type="term" value="F:polyribonucleotide nucleotidyltransferase activity"/>
    <property type="evidence" value="ECO:0007669"/>
    <property type="project" value="UniProtKB-UniRule"/>
</dbReference>
<dbReference type="GO" id="GO:0003723">
    <property type="term" value="F:RNA binding"/>
    <property type="evidence" value="ECO:0007669"/>
    <property type="project" value="UniProtKB-UniRule"/>
</dbReference>
<dbReference type="GO" id="GO:0006402">
    <property type="term" value="P:mRNA catabolic process"/>
    <property type="evidence" value="ECO:0007669"/>
    <property type="project" value="UniProtKB-UniRule"/>
</dbReference>
<dbReference type="GO" id="GO:0006396">
    <property type="term" value="P:RNA processing"/>
    <property type="evidence" value="ECO:0007669"/>
    <property type="project" value="InterPro"/>
</dbReference>
<dbReference type="CDD" id="cd02393">
    <property type="entry name" value="KH-I_PNPase"/>
    <property type="match status" value="1"/>
</dbReference>
<dbReference type="CDD" id="cd11363">
    <property type="entry name" value="RNase_PH_PNPase_1"/>
    <property type="match status" value="1"/>
</dbReference>
<dbReference type="CDD" id="cd11364">
    <property type="entry name" value="RNase_PH_PNPase_2"/>
    <property type="match status" value="1"/>
</dbReference>
<dbReference type="CDD" id="cd04472">
    <property type="entry name" value="S1_PNPase"/>
    <property type="match status" value="1"/>
</dbReference>
<dbReference type="FunFam" id="2.40.50.140:FF:000023">
    <property type="entry name" value="Polyribonucleotide nucleotidyltransferase"/>
    <property type="match status" value="1"/>
</dbReference>
<dbReference type="FunFam" id="3.30.1370.10:FF:000001">
    <property type="entry name" value="Polyribonucleotide nucleotidyltransferase"/>
    <property type="match status" value="1"/>
</dbReference>
<dbReference type="FunFam" id="3.30.230.70:FF:000001">
    <property type="entry name" value="Polyribonucleotide nucleotidyltransferase"/>
    <property type="match status" value="1"/>
</dbReference>
<dbReference type="FunFam" id="3.30.230.70:FF:000002">
    <property type="entry name" value="Polyribonucleotide nucleotidyltransferase"/>
    <property type="match status" value="1"/>
</dbReference>
<dbReference type="Gene3D" id="3.30.230.70">
    <property type="entry name" value="GHMP Kinase, N-terminal domain"/>
    <property type="match status" value="2"/>
</dbReference>
<dbReference type="Gene3D" id="3.30.1370.10">
    <property type="entry name" value="K Homology domain, type 1"/>
    <property type="match status" value="1"/>
</dbReference>
<dbReference type="Gene3D" id="2.40.50.140">
    <property type="entry name" value="Nucleic acid-binding proteins"/>
    <property type="match status" value="1"/>
</dbReference>
<dbReference type="HAMAP" id="MF_01595">
    <property type="entry name" value="PNPase"/>
    <property type="match status" value="1"/>
</dbReference>
<dbReference type="InterPro" id="IPR001247">
    <property type="entry name" value="ExoRNase_PH_dom1"/>
</dbReference>
<dbReference type="InterPro" id="IPR015847">
    <property type="entry name" value="ExoRNase_PH_dom2"/>
</dbReference>
<dbReference type="InterPro" id="IPR036345">
    <property type="entry name" value="ExoRNase_PH_dom2_sf"/>
</dbReference>
<dbReference type="InterPro" id="IPR004087">
    <property type="entry name" value="KH_dom"/>
</dbReference>
<dbReference type="InterPro" id="IPR004088">
    <property type="entry name" value="KH_dom_type_1"/>
</dbReference>
<dbReference type="InterPro" id="IPR036612">
    <property type="entry name" value="KH_dom_type_1_sf"/>
</dbReference>
<dbReference type="InterPro" id="IPR012340">
    <property type="entry name" value="NA-bd_OB-fold"/>
</dbReference>
<dbReference type="InterPro" id="IPR012162">
    <property type="entry name" value="PNPase"/>
</dbReference>
<dbReference type="InterPro" id="IPR027408">
    <property type="entry name" value="PNPase/RNase_PH_dom_sf"/>
</dbReference>
<dbReference type="InterPro" id="IPR015848">
    <property type="entry name" value="PNPase_PH_RNA-bd_bac/org-type"/>
</dbReference>
<dbReference type="InterPro" id="IPR036456">
    <property type="entry name" value="PNPase_PH_RNA-bd_sf"/>
</dbReference>
<dbReference type="InterPro" id="IPR020568">
    <property type="entry name" value="Ribosomal_Su5_D2-typ_SF"/>
</dbReference>
<dbReference type="InterPro" id="IPR003029">
    <property type="entry name" value="S1_domain"/>
</dbReference>
<dbReference type="NCBIfam" id="TIGR03591">
    <property type="entry name" value="polynuc_phos"/>
    <property type="match status" value="1"/>
</dbReference>
<dbReference type="NCBIfam" id="NF008805">
    <property type="entry name" value="PRK11824.1"/>
    <property type="match status" value="1"/>
</dbReference>
<dbReference type="PANTHER" id="PTHR11252">
    <property type="entry name" value="POLYRIBONUCLEOTIDE NUCLEOTIDYLTRANSFERASE"/>
    <property type="match status" value="1"/>
</dbReference>
<dbReference type="PANTHER" id="PTHR11252:SF0">
    <property type="entry name" value="POLYRIBONUCLEOTIDE NUCLEOTIDYLTRANSFERASE 1, MITOCHONDRIAL"/>
    <property type="match status" value="1"/>
</dbReference>
<dbReference type="Pfam" id="PF00013">
    <property type="entry name" value="KH_1"/>
    <property type="match status" value="1"/>
</dbReference>
<dbReference type="Pfam" id="PF03726">
    <property type="entry name" value="PNPase"/>
    <property type="match status" value="1"/>
</dbReference>
<dbReference type="Pfam" id="PF01138">
    <property type="entry name" value="RNase_PH"/>
    <property type="match status" value="2"/>
</dbReference>
<dbReference type="Pfam" id="PF03725">
    <property type="entry name" value="RNase_PH_C"/>
    <property type="match status" value="2"/>
</dbReference>
<dbReference type="Pfam" id="PF00575">
    <property type="entry name" value="S1"/>
    <property type="match status" value="1"/>
</dbReference>
<dbReference type="PIRSF" id="PIRSF005499">
    <property type="entry name" value="PNPase"/>
    <property type="match status" value="1"/>
</dbReference>
<dbReference type="SMART" id="SM00322">
    <property type="entry name" value="KH"/>
    <property type="match status" value="1"/>
</dbReference>
<dbReference type="SMART" id="SM00316">
    <property type="entry name" value="S1"/>
    <property type="match status" value="1"/>
</dbReference>
<dbReference type="SUPFAM" id="SSF54791">
    <property type="entry name" value="Eukaryotic type KH-domain (KH-domain type I)"/>
    <property type="match status" value="1"/>
</dbReference>
<dbReference type="SUPFAM" id="SSF50249">
    <property type="entry name" value="Nucleic acid-binding proteins"/>
    <property type="match status" value="1"/>
</dbReference>
<dbReference type="SUPFAM" id="SSF46915">
    <property type="entry name" value="Polynucleotide phosphorylase/guanosine pentaphosphate synthase (PNPase/GPSI), domain 3"/>
    <property type="match status" value="1"/>
</dbReference>
<dbReference type="SUPFAM" id="SSF55666">
    <property type="entry name" value="Ribonuclease PH domain 2-like"/>
    <property type="match status" value="2"/>
</dbReference>
<dbReference type="SUPFAM" id="SSF54211">
    <property type="entry name" value="Ribosomal protein S5 domain 2-like"/>
    <property type="match status" value="2"/>
</dbReference>
<dbReference type="PROSITE" id="PS50084">
    <property type="entry name" value="KH_TYPE_1"/>
    <property type="match status" value="1"/>
</dbReference>
<dbReference type="PROSITE" id="PS50126">
    <property type="entry name" value="S1"/>
    <property type="match status" value="1"/>
</dbReference>
<sequence length="704" mass="75671">MAKITKTFQYGKHTVTLETGEVARQASGAVIVKMDDTVLLVTAVAAKTAREGQDFFPLTVDYQEKFYAGGRIPGGFFKREGRATEKETLISRLIDRPIRPLFPEDYKNEVQIIATVMSMNPDIDGDIAALIGASAALSLAGTPFNGPIGAAKVGYKNGEYILNPTITELKDSQLELVVAGTANAVLMVESEAALLSEEVMLGAVTFGHREMQKVINIINELTVEAGTKPSTWVAPAKNTALISALKEAVGTQLAGAFQVRDKLQRRDAISAIKKDVLESLAGRVASEGWSSAELSKEFGELEYHTMRDSVLETKVRIDGRALDTVRPISVQAGVLPRTHGSALFTRGETQAIVVTTLGTARDGQVIDAVAGEYKENFLFHYNFPPYSVGECGRFGAPKRREIGHGRLAKRGVLAVMPSLEEFPYTIRVVSEITESNGSSSMASVCGSSLALMDAGVPVKAPVAGIAMGLVKEDDRFVVLSDILGDEDHLGDMDFKVAGTAEGVSALQMDIKIEGITEEIMKQALQQAKAGRLHILGEMSKALTTPRQELSDYAPRLLTIKIHPDKIREVIGKGGSTIQAITKETGTQIDIQDDGTIIIASVNAIAAQAAKSRIEQITSDVEPGRIYEGKVAKIMDFGAFVTILPGKDGLVHVSQISSERVEKVGDKLKEGDLVRVKVLEVDKQGRIRLSIKAVEEGEGVPASAE</sequence>
<reference key="1">
    <citation type="journal article" date="2005" name="Genome Res.">
        <title>Comparative and functional genomic analyses of the pathogenicity of phytopathogen Xanthomonas campestris pv. campestris.</title>
        <authorList>
            <person name="Qian W."/>
            <person name="Jia Y."/>
            <person name="Ren S.-X."/>
            <person name="He Y.-Q."/>
            <person name="Feng J.-X."/>
            <person name="Lu L.-F."/>
            <person name="Sun Q."/>
            <person name="Ying G."/>
            <person name="Tang D.-J."/>
            <person name="Tang H."/>
            <person name="Wu W."/>
            <person name="Hao P."/>
            <person name="Wang L."/>
            <person name="Jiang B.-L."/>
            <person name="Zeng S."/>
            <person name="Gu W.-Y."/>
            <person name="Lu G."/>
            <person name="Rong L."/>
            <person name="Tian Y."/>
            <person name="Yao Z."/>
            <person name="Fu G."/>
            <person name="Chen B."/>
            <person name="Fang R."/>
            <person name="Qiang B."/>
            <person name="Chen Z."/>
            <person name="Zhao G.-P."/>
            <person name="Tang J.-L."/>
            <person name="He C."/>
        </authorList>
    </citation>
    <scope>NUCLEOTIDE SEQUENCE [LARGE SCALE GENOMIC DNA]</scope>
    <source>
        <strain>8004</strain>
    </source>
</reference>
<keyword id="KW-0963">Cytoplasm</keyword>
<keyword id="KW-0460">Magnesium</keyword>
<keyword id="KW-0479">Metal-binding</keyword>
<keyword id="KW-0548">Nucleotidyltransferase</keyword>
<keyword id="KW-0694">RNA-binding</keyword>
<keyword id="KW-0808">Transferase</keyword>
<comment type="function">
    <text evidence="1">Involved in mRNA degradation. Catalyzes the phosphorolysis of single-stranded polyribonucleotides processively in the 3'- to 5'-direction.</text>
</comment>
<comment type="catalytic activity">
    <reaction evidence="1">
        <text>RNA(n+1) + phosphate = RNA(n) + a ribonucleoside 5'-diphosphate</text>
        <dbReference type="Rhea" id="RHEA:22096"/>
        <dbReference type="Rhea" id="RHEA-COMP:14527"/>
        <dbReference type="Rhea" id="RHEA-COMP:17342"/>
        <dbReference type="ChEBI" id="CHEBI:43474"/>
        <dbReference type="ChEBI" id="CHEBI:57930"/>
        <dbReference type="ChEBI" id="CHEBI:140395"/>
        <dbReference type="EC" id="2.7.7.8"/>
    </reaction>
</comment>
<comment type="cofactor">
    <cofactor evidence="1">
        <name>Mg(2+)</name>
        <dbReference type="ChEBI" id="CHEBI:18420"/>
    </cofactor>
</comment>
<comment type="subunit">
    <text evidence="1">Component of the RNA degradosome, which is a multiprotein complex involved in RNA processing and mRNA degradation.</text>
</comment>
<comment type="subcellular location">
    <subcellularLocation>
        <location evidence="1">Cytoplasm</location>
    </subcellularLocation>
</comment>
<comment type="similarity">
    <text evidence="1">Belongs to the polyribonucleotide nucleotidyltransferase family.</text>
</comment>
<evidence type="ECO:0000255" key="1">
    <source>
        <dbReference type="HAMAP-Rule" id="MF_01595"/>
    </source>
</evidence>
<protein>
    <recommendedName>
        <fullName evidence="1">Polyribonucleotide nucleotidyltransferase</fullName>
        <ecNumber evidence="1">2.7.7.8</ecNumber>
    </recommendedName>
    <alternativeName>
        <fullName evidence="1">Polynucleotide phosphorylase</fullName>
        <shortName evidence="1">PNPase</shortName>
    </alternativeName>
</protein>
<feature type="chain" id="PRO_0000329940" description="Polyribonucleotide nucleotidyltransferase">
    <location>
        <begin position="1"/>
        <end position="704"/>
    </location>
</feature>
<feature type="domain" description="KH" evidence="1">
    <location>
        <begin position="554"/>
        <end position="613"/>
    </location>
</feature>
<feature type="domain" description="S1 motif" evidence="1">
    <location>
        <begin position="623"/>
        <end position="691"/>
    </location>
</feature>
<feature type="binding site" evidence="1">
    <location>
        <position position="487"/>
    </location>
    <ligand>
        <name>Mg(2+)</name>
        <dbReference type="ChEBI" id="CHEBI:18420"/>
    </ligand>
</feature>
<feature type="binding site" evidence="1">
    <location>
        <position position="493"/>
    </location>
    <ligand>
        <name>Mg(2+)</name>
        <dbReference type="ChEBI" id="CHEBI:18420"/>
    </ligand>
</feature>
<gene>
    <name evidence="1" type="primary">pnp</name>
    <name type="ordered locus">XC_1609</name>
</gene>
<organism>
    <name type="scientific">Xanthomonas campestris pv. campestris (strain 8004)</name>
    <dbReference type="NCBI Taxonomy" id="314565"/>
    <lineage>
        <taxon>Bacteria</taxon>
        <taxon>Pseudomonadati</taxon>
        <taxon>Pseudomonadota</taxon>
        <taxon>Gammaproteobacteria</taxon>
        <taxon>Lysobacterales</taxon>
        <taxon>Lysobacteraceae</taxon>
        <taxon>Xanthomonas</taxon>
    </lineage>
</organism>